<proteinExistence type="inferred from homology"/>
<sequence length="827" mass="98163">MDSKYNHYEIEKDKNQKWIDKKYFINHDLDKKPFSIILPPPNVTGQLHLGHALNGYLQDSVIRYKKLEGYDVLFLPAMDHAGIATQIKVEESLAKENLLKQDIGREKFLKFSYQWKDKYANIIKSQWNKLGLALDYSSERFTLDQDSKDTVNKVFIDLYNAGIIYQGVKGINWDPLQKTALSNVEVINKETPQKMYYIKYFLENSDEFVEIATVRTETLYSDRAIGINPNDLRAKNYVNKFVIHPLTKKRLPIITDDYIDQSFASGFMKISAHSLADIDILNKNNLEIVESIDESGFLTNICDEFEGMERFEAREKIAQKLQKENLISRVENYSSNIGYSDRTKVPIEILVKKQWFVKMDLFSKMVLDSLESKNKVNFYPSRFKKNLEGWMNKTYDWTISRQLWWGHQIPAWYKDEQTKVQLNSPGPDWTQDPDVLDTWFSSAIAPFSFFGWPNTYKKLKRYYPTSLLVTGHDIIFFWVSRMYFSGLYFMKDKPFNDVLLHGLIRDEQRRKMTKSLGNGIDPMVLIDQYGSDSLRWFLITNTTPGLDITYNEEKIKSSWNFMNKLWNIARFINLQENTKKVSMSKYDYWISDKFNKVESYVKKFMKKYEFTLIGKEIYKFIINDFSSWYLEFSKITKNIDFQKVIFKRLLLLLHPFIPFLTDHLFKIIYDQELLEHTFENKKLKTQKNNVDQLILVIRAIREFREKYQISKKEKIKYWIQDCQFLQEDIDAINFLTFSELSQNSENMTIVENIKIFMILPKNIEENLSKEKAQKIEFLKFEIKRAQSLLLNEKFISKAPTLKVEEEKAKLEKYQLQLKELLDEKIIE</sequence>
<comment type="function">
    <text evidence="1">Catalyzes the attachment of valine to tRNA(Val). As ValRS can inadvertently accommodate and process structurally similar amino acids such as threonine, to avoid such errors, it has a 'posttransfer' editing activity that hydrolyzes mischarged Thr-tRNA(Val) in a tRNA-dependent manner.</text>
</comment>
<comment type="catalytic activity">
    <reaction evidence="1">
        <text>tRNA(Val) + L-valine + ATP = L-valyl-tRNA(Val) + AMP + diphosphate</text>
        <dbReference type="Rhea" id="RHEA:10704"/>
        <dbReference type="Rhea" id="RHEA-COMP:9672"/>
        <dbReference type="Rhea" id="RHEA-COMP:9708"/>
        <dbReference type="ChEBI" id="CHEBI:30616"/>
        <dbReference type="ChEBI" id="CHEBI:33019"/>
        <dbReference type="ChEBI" id="CHEBI:57762"/>
        <dbReference type="ChEBI" id="CHEBI:78442"/>
        <dbReference type="ChEBI" id="CHEBI:78537"/>
        <dbReference type="ChEBI" id="CHEBI:456215"/>
        <dbReference type="EC" id="6.1.1.9"/>
    </reaction>
</comment>
<comment type="subunit">
    <text evidence="1">Monomer.</text>
</comment>
<comment type="subcellular location">
    <subcellularLocation>
        <location evidence="1">Cytoplasm</location>
    </subcellularLocation>
</comment>
<comment type="domain">
    <text evidence="1">ValRS has two distinct active sites: one for aminoacylation and one for editing. The misactivated threonine is translocated from the active site to the editing site.</text>
</comment>
<comment type="domain">
    <text evidence="1">The C-terminal coiled-coil domain is crucial for aminoacylation activity.</text>
</comment>
<comment type="similarity">
    <text evidence="1">Belongs to the class-I aminoacyl-tRNA synthetase family. ValS type 1 subfamily.</text>
</comment>
<reference key="1">
    <citation type="journal article" date="2001" name="Nucleic Acids Res.">
        <title>The complete genome sequence of the murine respiratory pathogen Mycoplasma pulmonis.</title>
        <authorList>
            <person name="Chambaud I."/>
            <person name="Heilig R."/>
            <person name="Ferris S."/>
            <person name="Barbe V."/>
            <person name="Samson D."/>
            <person name="Galisson F."/>
            <person name="Moszer I."/>
            <person name="Dybvig K."/>
            <person name="Wroblewski H."/>
            <person name="Viari A."/>
            <person name="Rocha E.P.C."/>
            <person name="Blanchard A."/>
        </authorList>
    </citation>
    <scope>NUCLEOTIDE SEQUENCE [LARGE SCALE GENOMIC DNA]</scope>
    <source>
        <strain>UAB CTIP</strain>
    </source>
</reference>
<name>SYV_MYCPU</name>
<gene>
    <name evidence="1" type="primary">valS</name>
    <name type="ordered locus">MYPU_2570</name>
</gene>
<organism>
    <name type="scientific">Mycoplasmopsis pulmonis (strain UAB CTIP)</name>
    <name type="common">Mycoplasma pulmonis</name>
    <dbReference type="NCBI Taxonomy" id="272635"/>
    <lineage>
        <taxon>Bacteria</taxon>
        <taxon>Bacillati</taxon>
        <taxon>Mycoplasmatota</taxon>
        <taxon>Mycoplasmoidales</taxon>
        <taxon>Metamycoplasmataceae</taxon>
        <taxon>Mycoplasmopsis</taxon>
    </lineage>
</organism>
<feature type="chain" id="PRO_0000224514" description="Valine--tRNA ligase">
    <location>
        <begin position="1"/>
        <end position="827"/>
    </location>
</feature>
<feature type="coiled-coil region" evidence="1">
    <location>
        <begin position="765"/>
        <end position="827"/>
    </location>
</feature>
<feature type="short sequence motif" description="'HIGH' region">
    <location>
        <begin position="41"/>
        <end position="51"/>
    </location>
</feature>
<feature type="short sequence motif" description="'KMSKS' region">
    <location>
        <begin position="511"/>
        <end position="515"/>
    </location>
</feature>
<feature type="binding site" evidence="1">
    <location>
        <position position="514"/>
    </location>
    <ligand>
        <name>ATP</name>
        <dbReference type="ChEBI" id="CHEBI:30616"/>
    </ligand>
</feature>
<protein>
    <recommendedName>
        <fullName evidence="1">Valine--tRNA ligase</fullName>
        <ecNumber evidence="1">6.1.1.9</ecNumber>
    </recommendedName>
    <alternativeName>
        <fullName evidence="1">Valyl-tRNA synthetase</fullName>
        <shortName evidence="1">ValRS</shortName>
    </alternativeName>
</protein>
<accession>Q98QV4</accession>
<keyword id="KW-0030">Aminoacyl-tRNA synthetase</keyword>
<keyword id="KW-0067">ATP-binding</keyword>
<keyword id="KW-0175">Coiled coil</keyword>
<keyword id="KW-0963">Cytoplasm</keyword>
<keyword id="KW-0436">Ligase</keyword>
<keyword id="KW-0547">Nucleotide-binding</keyword>
<keyword id="KW-0648">Protein biosynthesis</keyword>
<keyword id="KW-1185">Reference proteome</keyword>
<dbReference type="EC" id="6.1.1.9" evidence="1"/>
<dbReference type="EMBL" id="AL445563">
    <property type="protein sequence ID" value="CAC13430.1"/>
    <property type="molecule type" value="Genomic_DNA"/>
</dbReference>
<dbReference type="PIR" id="A90544">
    <property type="entry name" value="A90544"/>
</dbReference>
<dbReference type="RefSeq" id="WP_010925061.1">
    <property type="nucleotide sequence ID" value="NC_002771.1"/>
</dbReference>
<dbReference type="SMR" id="Q98QV4"/>
<dbReference type="STRING" id="272635.gene:17576847"/>
<dbReference type="KEGG" id="mpu:MYPU_2570"/>
<dbReference type="eggNOG" id="COG0525">
    <property type="taxonomic scope" value="Bacteria"/>
</dbReference>
<dbReference type="HOGENOM" id="CLU_001493_0_2_14"/>
<dbReference type="BioCyc" id="MPUL272635:G1GT6-258-MONOMER"/>
<dbReference type="Proteomes" id="UP000000528">
    <property type="component" value="Chromosome"/>
</dbReference>
<dbReference type="GO" id="GO:0005829">
    <property type="term" value="C:cytosol"/>
    <property type="evidence" value="ECO:0007669"/>
    <property type="project" value="TreeGrafter"/>
</dbReference>
<dbReference type="GO" id="GO:0002161">
    <property type="term" value="F:aminoacyl-tRNA deacylase activity"/>
    <property type="evidence" value="ECO:0007669"/>
    <property type="project" value="InterPro"/>
</dbReference>
<dbReference type="GO" id="GO:0005524">
    <property type="term" value="F:ATP binding"/>
    <property type="evidence" value="ECO:0007669"/>
    <property type="project" value="UniProtKB-UniRule"/>
</dbReference>
<dbReference type="GO" id="GO:0004832">
    <property type="term" value="F:valine-tRNA ligase activity"/>
    <property type="evidence" value="ECO:0007669"/>
    <property type="project" value="UniProtKB-UniRule"/>
</dbReference>
<dbReference type="GO" id="GO:0006438">
    <property type="term" value="P:valyl-tRNA aminoacylation"/>
    <property type="evidence" value="ECO:0007669"/>
    <property type="project" value="UniProtKB-UniRule"/>
</dbReference>
<dbReference type="CDD" id="cd07962">
    <property type="entry name" value="Anticodon_Ia_Val"/>
    <property type="match status" value="1"/>
</dbReference>
<dbReference type="CDD" id="cd00817">
    <property type="entry name" value="ValRS_core"/>
    <property type="match status" value="1"/>
</dbReference>
<dbReference type="Gene3D" id="3.40.50.620">
    <property type="entry name" value="HUPs"/>
    <property type="match status" value="2"/>
</dbReference>
<dbReference type="Gene3D" id="1.10.730.10">
    <property type="entry name" value="Isoleucyl-tRNA Synthetase, Domain 1"/>
    <property type="match status" value="1"/>
</dbReference>
<dbReference type="HAMAP" id="MF_02004">
    <property type="entry name" value="Val_tRNA_synth_type1"/>
    <property type="match status" value="1"/>
</dbReference>
<dbReference type="InterPro" id="IPR001412">
    <property type="entry name" value="aa-tRNA-synth_I_CS"/>
</dbReference>
<dbReference type="InterPro" id="IPR002300">
    <property type="entry name" value="aa-tRNA-synth_Ia"/>
</dbReference>
<dbReference type="InterPro" id="IPR033705">
    <property type="entry name" value="Anticodon_Ia_Val"/>
</dbReference>
<dbReference type="InterPro" id="IPR013155">
    <property type="entry name" value="M/V/L/I-tRNA-synth_anticd-bd"/>
</dbReference>
<dbReference type="InterPro" id="IPR014729">
    <property type="entry name" value="Rossmann-like_a/b/a_fold"/>
</dbReference>
<dbReference type="InterPro" id="IPR010978">
    <property type="entry name" value="tRNA-bd_arm"/>
</dbReference>
<dbReference type="InterPro" id="IPR009080">
    <property type="entry name" value="tRNAsynth_Ia_anticodon-bd"/>
</dbReference>
<dbReference type="InterPro" id="IPR009008">
    <property type="entry name" value="Val/Leu/Ile-tRNA-synth_edit"/>
</dbReference>
<dbReference type="InterPro" id="IPR002303">
    <property type="entry name" value="Valyl-tRNA_ligase"/>
</dbReference>
<dbReference type="NCBIfam" id="NF004349">
    <property type="entry name" value="PRK05729.1"/>
    <property type="match status" value="1"/>
</dbReference>
<dbReference type="NCBIfam" id="TIGR00422">
    <property type="entry name" value="valS"/>
    <property type="match status" value="1"/>
</dbReference>
<dbReference type="PANTHER" id="PTHR11946:SF93">
    <property type="entry name" value="VALINE--TRNA LIGASE, CHLOROPLASTIC_MITOCHONDRIAL 2"/>
    <property type="match status" value="1"/>
</dbReference>
<dbReference type="PANTHER" id="PTHR11946">
    <property type="entry name" value="VALYL-TRNA SYNTHETASES"/>
    <property type="match status" value="1"/>
</dbReference>
<dbReference type="Pfam" id="PF08264">
    <property type="entry name" value="Anticodon_1"/>
    <property type="match status" value="1"/>
</dbReference>
<dbReference type="Pfam" id="PF00133">
    <property type="entry name" value="tRNA-synt_1"/>
    <property type="match status" value="1"/>
</dbReference>
<dbReference type="PRINTS" id="PR00986">
    <property type="entry name" value="TRNASYNTHVAL"/>
</dbReference>
<dbReference type="SUPFAM" id="SSF47323">
    <property type="entry name" value="Anticodon-binding domain of a subclass of class I aminoacyl-tRNA synthetases"/>
    <property type="match status" value="1"/>
</dbReference>
<dbReference type="SUPFAM" id="SSF52374">
    <property type="entry name" value="Nucleotidylyl transferase"/>
    <property type="match status" value="1"/>
</dbReference>
<dbReference type="SUPFAM" id="SSF46589">
    <property type="entry name" value="tRNA-binding arm"/>
    <property type="match status" value="1"/>
</dbReference>
<dbReference type="SUPFAM" id="SSF50677">
    <property type="entry name" value="ValRS/IleRS/LeuRS editing domain"/>
    <property type="match status" value="1"/>
</dbReference>
<dbReference type="PROSITE" id="PS00178">
    <property type="entry name" value="AA_TRNA_LIGASE_I"/>
    <property type="match status" value="1"/>
</dbReference>
<evidence type="ECO:0000255" key="1">
    <source>
        <dbReference type="HAMAP-Rule" id="MF_02004"/>
    </source>
</evidence>